<reference key="1">
    <citation type="submission" date="2007-03" db="EMBL/GenBank/DDBJ databases">
        <authorList>
            <consortium name="NIH - Xenopus Gene Collection (XGC) project"/>
        </authorList>
    </citation>
    <scope>NUCLEOTIDE SEQUENCE [LARGE SCALE MRNA]</scope>
    <source>
        <tissue>Embryo</tissue>
    </source>
</reference>
<organism>
    <name type="scientific">Xenopus tropicalis</name>
    <name type="common">Western clawed frog</name>
    <name type="synonym">Silurana tropicalis</name>
    <dbReference type="NCBI Taxonomy" id="8364"/>
    <lineage>
        <taxon>Eukaryota</taxon>
        <taxon>Metazoa</taxon>
        <taxon>Chordata</taxon>
        <taxon>Craniata</taxon>
        <taxon>Vertebrata</taxon>
        <taxon>Euteleostomi</taxon>
        <taxon>Amphibia</taxon>
        <taxon>Batrachia</taxon>
        <taxon>Anura</taxon>
        <taxon>Pipoidea</taxon>
        <taxon>Pipidae</taxon>
        <taxon>Xenopodinae</taxon>
        <taxon>Xenopus</taxon>
        <taxon>Silurana</taxon>
    </lineage>
</organism>
<comment type="function">
    <text evidence="1">Molecular chaperone which mediates the proper assembly and functional expression of the nicotinic acetylcholine receptors (nAChRs) throughout the brain (By similarity). Essential for the proper folding, assembly, function and surface trafficking of alpha-7 (CHRNA7), alpha-4-beta-2, alpha-3-beta-2 and alpha-3-beta-4 receptors (By similarity).</text>
</comment>
<comment type="subcellular location">
    <subcellularLocation>
        <location evidence="3">Peroxisome membrane</location>
        <topology evidence="4">Multi-pass membrane protein</topology>
    </subcellularLocation>
    <subcellularLocation>
        <location evidence="2">Cytoplasmic vesicle</location>
    </subcellularLocation>
    <subcellularLocation>
        <location evidence="3">Endoplasmic reticulum membrane</location>
        <topology evidence="4">Multi-pass membrane protein</topology>
    </subcellularLocation>
    <text evidence="2">Shedding may lead to a soluble peptide.</text>
</comment>
<comment type="similarity">
    <text evidence="6">Belongs to the DoxX family.</text>
</comment>
<gene>
    <name type="primary">tmem35a</name>
    <name evidence="1" type="synonym">nacho</name>
    <name type="synonym">tmem35</name>
</gene>
<accession>A4IGI5</accession>
<dbReference type="EMBL" id="BC135118">
    <property type="protein sequence ID" value="AAI35119.1"/>
    <property type="molecule type" value="mRNA"/>
</dbReference>
<dbReference type="RefSeq" id="NP_001090850.1">
    <property type="nucleotide sequence ID" value="NM_001097381.1"/>
</dbReference>
<dbReference type="SMR" id="A4IGI5"/>
<dbReference type="FunCoup" id="A4IGI5">
    <property type="interactions" value="95"/>
</dbReference>
<dbReference type="PaxDb" id="8364-ENSXETP00000061631"/>
<dbReference type="DNASU" id="100038262"/>
<dbReference type="GeneID" id="100038262"/>
<dbReference type="KEGG" id="xtr:100038262"/>
<dbReference type="AGR" id="Xenbase:XB-GENE-957194"/>
<dbReference type="CTD" id="59353"/>
<dbReference type="Xenbase" id="XB-GENE-957194">
    <property type="gene designation" value="tmem35a"/>
</dbReference>
<dbReference type="eggNOG" id="ENOG502RXPR">
    <property type="taxonomic scope" value="Eukaryota"/>
</dbReference>
<dbReference type="HOGENOM" id="CLU_121618_0_0_1"/>
<dbReference type="InParanoid" id="A4IGI5"/>
<dbReference type="OMA" id="YQTSRRE"/>
<dbReference type="OrthoDB" id="432685at2759"/>
<dbReference type="PhylomeDB" id="A4IGI5"/>
<dbReference type="TreeFam" id="TF300206"/>
<dbReference type="Proteomes" id="UP000008143">
    <property type="component" value="Chromosome 8"/>
</dbReference>
<dbReference type="Bgee" id="ENSXETG00000031136">
    <property type="expression patterns" value="Expressed in brain and 4 other cell types or tissues"/>
</dbReference>
<dbReference type="GO" id="GO:0031410">
    <property type="term" value="C:cytoplasmic vesicle"/>
    <property type="evidence" value="ECO:0007669"/>
    <property type="project" value="UniProtKB-KW"/>
</dbReference>
<dbReference type="GO" id="GO:0005783">
    <property type="term" value="C:endoplasmic reticulum"/>
    <property type="evidence" value="ECO:0000250"/>
    <property type="project" value="UniProtKB"/>
</dbReference>
<dbReference type="GO" id="GO:0005789">
    <property type="term" value="C:endoplasmic reticulum membrane"/>
    <property type="evidence" value="ECO:0007669"/>
    <property type="project" value="UniProtKB-SubCell"/>
</dbReference>
<dbReference type="GO" id="GO:0005778">
    <property type="term" value="C:peroxisomal membrane"/>
    <property type="evidence" value="ECO:0007669"/>
    <property type="project" value="UniProtKB-SubCell"/>
</dbReference>
<dbReference type="GO" id="GO:0051131">
    <property type="term" value="P:chaperone-mediated protein complex assembly"/>
    <property type="evidence" value="ECO:0000250"/>
    <property type="project" value="UniProtKB"/>
</dbReference>
<dbReference type="GO" id="GO:2000010">
    <property type="term" value="P:positive regulation of protein localization to cell surface"/>
    <property type="evidence" value="ECO:0000250"/>
    <property type="project" value="UniProtKB"/>
</dbReference>
<dbReference type="InterPro" id="IPR040399">
    <property type="entry name" value="TMEM35A/B"/>
</dbReference>
<dbReference type="PANTHER" id="PTHR13163:SF0">
    <property type="entry name" value="NOVEL ACETYLCHOLINE RECEPTOR CHAPERONE"/>
    <property type="match status" value="1"/>
</dbReference>
<dbReference type="PANTHER" id="PTHR13163">
    <property type="entry name" value="SPINAL CORD EXPRESSION PROTEIN 4"/>
    <property type="match status" value="1"/>
</dbReference>
<protein>
    <recommendedName>
        <fullName evidence="1">Novel acetylcholine receptor chaperone</fullName>
    </recommendedName>
    <alternativeName>
        <fullName>Transmembrane protein 35A</fullName>
    </alternativeName>
</protein>
<feature type="chain" id="PRO_0000359758" description="Novel acetylcholine receptor chaperone">
    <location>
        <begin position="1"/>
        <end position="162"/>
    </location>
</feature>
<feature type="topological domain" description="Cytoplasmic" evidence="6">
    <location>
        <begin position="1"/>
        <end position="5"/>
    </location>
</feature>
<feature type="transmembrane region" description="Helical; Name=1" evidence="4">
    <location>
        <begin position="6"/>
        <end position="26"/>
    </location>
</feature>
<feature type="topological domain" description="Lumenal" evidence="6">
    <location>
        <begin position="27"/>
        <end position="61"/>
    </location>
</feature>
<feature type="transmembrane region" description="Helical; Name=2" evidence="4">
    <location>
        <begin position="62"/>
        <end position="82"/>
    </location>
</feature>
<feature type="topological domain" description="Cytoplasmic" evidence="6">
    <location>
        <begin position="83"/>
        <end position="88"/>
    </location>
</feature>
<feature type="transmembrane region" description="Helical; Name=3" evidence="4">
    <location>
        <begin position="89"/>
        <end position="109"/>
    </location>
</feature>
<feature type="topological domain" description="Lumenal" evidence="6">
    <location>
        <begin position="110"/>
        <end position="114"/>
    </location>
</feature>
<feature type="transmembrane region" description="Helical; Name=4" evidence="4">
    <location>
        <begin position="115"/>
        <end position="131"/>
    </location>
</feature>
<feature type="topological domain" description="Cytoplasmic" evidence="6">
    <location>
        <begin position="132"/>
        <end position="162"/>
    </location>
</feature>
<feature type="region of interest" description="Disordered" evidence="5">
    <location>
        <begin position="141"/>
        <end position="162"/>
    </location>
</feature>
<feature type="compositionally biased region" description="Basic and acidic residues" evidence="5">
    <location>
        <begin position="152"/>
        <end position="162"/>
    </location>
</feature>
<keyword id="KW-0143">Chaperone</keyword>
<keyword id="KW-0968">Cytoplasmic vesicle</keyword>
<keyword id="KW-0256">Endoplasmic reticulum</keyword>
<keyword id="KW-0472">Membrane</keyword>
<keyword id="KW-0576">Peroxisome</keyword>
<keyword id="KW-1185">Reference proteome</keyword>
<keyword id="KW-0812">Transmembrane</keyword>
<keyword id="KW-1133">Transmembrane helix</keyword>
<name>NACHO_XENTR</name>
<evidence type="ECO:0000250" key="1">
    <source>
        <dbReference type="UniProtKB" id="Q53FP2"/>
    </source>
</evidence>
<evidence type="ECO:0000250" key="2">
    <source>
        <dbReference type="UniProtKB" id="Q6JAM9"/>
    </source>
</evidence>
<evidence type="ECO:0000250" key="3">
    <source>
        <dbReference type="UniProtKB" id="Q9D328"/>
    </source>
</evidence>
<evidence type="ECO:0000255" key="4"/>
<evidence type="ECO:0000256" key="5">
    <source>
        <dbReference type="SAM" id="MobiDB-lite"/>
    </source>
</evidence>
<evidence type="ECO:0000305" key="6"/>
<sequence length="162" mass="17953">MASPRTVTIVALSVTLGLFFVFMGTIKLTPRLSKDAYSEMKRAYKSYVKALPALKKIGISSVFLRKAIGSLELACGIVLTLVPGRPKDVANFILLLLVLIVLFFHQLVGDPLKRYAHALVFGILLTCRLLVSRQPEEEFPEKKLSRGNNGAHSREPIKMKVS</sequence>
<proteinExistence type="evidence at transcript level"/>